<reference key="1">
    <citation type="journal article" date="2004" name="Nature">
        <title>Genesis of a highly pathogenic and potentially pandemic H5N1 influenza virus in eastern Asia.</title>
        <authorList>
            <person name="Li K.S."/>
            <person name="Guan Y."/>
            <person name="Wang J."/>
            <person name="Smith G.J.D."/>
            <person name="Xu K.M."/>
            <person name="Duan L."/>
            <person name="Rahardjo A.P."/>
            <person name="Puthavathana P."/>
            <person name="Buranathai C."/>
            <person name="Nguyen T.D."/>
            <person name="Estoepangestie A.T.S."/>
            <person name="Chaisingh A."/>
            <person name="Auewarakul P."/>
            <person name="Long H.T."/>
            <person name="Hanh N.T.H."/>
            <person name="Webby R.J."/>
            <person name="Poon L.L.M."/>
            <person name="Chen H."/>
            <person name="Shortridge K.F."/>
            <person name="Yuen K.Y."/>
            <person name="Webster R.G."/>
            <person name="Peiris J.S.M."/>
        </authorList>
    </citation>
    <scope>NUCLEOTIDE SEQUENCE [GENOMIC RNA]</scope>
</reference>
<comment type="function">
    <text evidence="1 4">Plays a major role in the shutoff of the host protein expression by cleaving mRNAs probably via an endonuclease activity. This host shutoff allows the virus to escape from the host antiviral response (By similarity). Hijacks host RNA splicing machinery to selectively target host RNAs containing introns for destruction. This may explain the preferential degradation of RNAs that have undergone co- or post-transcriptional processing (By similarity).</text>
</comment>
<comment type="subcellular location">
    <subcellularLocation>
        <location evidence="4">Host cytoplasm</location>
    </subcellularLocation>
    <subcellularLocation>
        <location evidence="4">Host nucleus</location>
    </subcellularLocation>
</comment>
<comment type="alternative products">
    <event type="ribosomal frameshifting"/>
    <isoform>
        <id>P0CK71-1</id>
        <name>PA-X</name>
        <sequence type="displayed"/>
    </isoform>
    <isoform>
        <id>Q6DNX9-1</id>
        <name>PA</name>
        <sequence type="external"/>
    </isoform>
</comment>
<comment type="domain">
    <text evidence="1 4">The probable endonuclease active site in the N-terminus and the basic amino acid cluster in the C-terminus are important for the shutoff activity. The C-terminus acts as a nuclear localization signal (By similarity). The C-terminus is recruited to host protein complexes involved in nuclear Pol II RNA processing (By similarity).</text>
</comment>
<comment type="similarity">
    <text evidence="5">Belongs to the influenza viruses PA-X family.</text>
</comment>
<organismHost>
    <name type="scientific">Aves</name>
    <dbReference type="NCBI Taxonomy" id="8782"/>
</organismHost>
<organismHost>
    <name type="scientific">Felis catus</name>
    <name type="common">Cat</name>
    <name type="synonym">Felis silvestris catus</name>
    <dbReference type="NCBI Taxonomy" id="9685"/>
</organismHost>
<organismHost>
    <name type="scientific">Homo sapiens</name>
    <name type="common">Human</name>
    <dbReference type="NCBI Taxonomy" id="9606"/>
</organismHost>
<organismHost>
    <name type="scientific">Panthera pardus</name>
    <name type="common">Leopard</name>
    <name type="synonym">Felis pardus</name>
    <dbReference type="NCBI Taxonomy" id="9691"/>
</organismHost>
<organismHost>
    <name type="scientific">Panthera tigris</name>
    <name type="common">Tiger</name>
    <dbReference type="NCBI Taxonomy" id="9694"/>
</organismHost>
<organismHost>
    <name type="scientific">Sus scrofa</name>
    <name type="common">Pig</name>
    <dbReference type="NCBI Taxonomy" id="9823"/>
</organismHost>
<proteinExistence type="inferred from homology"/>
<gene>
    <name type="primary">PA</name>
</gene>
<organism>
    <name type="scientific">Influenza A virus (strain A/Chicken/Hong Kong/31.2/2002 H5N1 genotype X1)</name>
    <dbReference type="NCBI Taxonomy" id="284169"/>
    <lineage>
        <taxon>Viruses</taxon>
        <taxon>Riboviria</taxon>
        <taxon>Orthornavirae</taxon>
        <taxon>Negarnaviricota</taxon>
        <taxon>Polyploviricotina</taxon>
        <taxon>Insthoviricetes</taxon>
        <taxon>Articulavirales</taxon>
        <taxon>Orthomyxoviridae</taxon>
        <taxon>Alphainfluenzavirus</taxon>
        <taxon>Alphainfluenzavirus influenzae</taxon>
        <taxon>Influenza A virus</taxon>
    </lineage>
</organism>
<accession>P0CK71</accession>
<dbReference type="EMBL" id="AY651623">
    <property type="status" value="NOT_ANNOTATED_CDS"/>
    <property type="molecule type" value="Genomic_RNA"/>
</dbReference>
<dbReference type="SMR" id="P0CK71"/>
<dbReference type="IntAct" id="P0CK71">
    <property type="interactions" value="1"/>
</dbReference>
<dbReference type="GO" id="GO:0003723">
    <property type="term" value="F:RNA binding"/>
    <property type="evidence" value="ECO:0007669"/>
    <property type="project" value="InterPro"/>
</dbReference>
<dbReference type="GO" id="GO:0039694">
    <property type="term" value="P:viral RNA genome replication"/>
    <property type="evidence" value="ECO:0007669"/>
    <property type="project" value="InterPro"/>
</dbReference>
<dbReference type="GO" id="GO:0075523">
    <property type="term" value="P:viral translational frameshifting"/>
    <property type="evidence" value="ECO:0007669"/>
    <property type="project" value="UniProtKB-KW"/>
</dbReference>
<dbReference type="FunFam" id="3.40.91.90:FF:000001">
    <property type="entry name" value="Polymerase acidic protein"/>
    <property type="match status" value="1"/>
</dbReference>
<dbReference type="Gene3D" id="3.40.91.90">
    <property type="entry name" value="Influenza RNA-dependent RNA polymerase subunit PA, endonuclease domain"/>
    <property type="match status" value="1"/>
</dbReference>
<dbReference type="InterPro" id="IPR001009">
    <property type="entry name" value="PA/PA-X"/>
</dbReference>
<dbReference type="InterPro" id="IPR038372">
    <property type="entry name" value="PA/PA-X_sf"/>
</dbReference>
<dbReference type="Pfam" id="PF00603">
    <property type="entry name" value="Flu_PA"/>
    <property type="match status" value="1"/>
</dbReference>
<name>PAX_I02A2</name>
<evidence type="ECO:0000250" key="1">
    <source>
        <dbReference type="UniProtKB" id="P0CK64"/>
    </source>
</evidence>
<evidence type="ECO:0000250" key="2">
    <source>
        <dbReference type="UniProtKB" id="P0CK68"/>
    </source>
</evidence>
<evidence type="ECO:0000250" key="3">
    <source>
        <dbReference type="UniProtKB" id="P0DJW8"/>
    </source>
</evidence>
<evidence type="ECO:0000250" key="4">
    <source>
        <dbReference type="UniProtKB" id="P0DXO5"/>
    </source>
</evidence>
<evidence type="ECO:0000305" key="5"/>
<sequence length="252" mass="29403">MEDFVRQCFNPMIVELAEKAMKEYGEDPKIETNKFAAICTHLEVCFMYSDFHFIDERGESIIVESGDPNALLKHRFEIIEGRDRTMAWTVVNSICNTTGVEKPKFLPDLYDYKENRFIEIGVTRREVHIYYLEKANKIKSEKTHIHIFSFTGEEMATKSDYTLDEESRARIKTRLFTIRQEMASRGLWDSFVSPKEAKRQLKKDLKLQEPCAGLPTKVSHRTSPALKTLEPMWMDSNRTAALRASFLKCQKR</sequence>
<keyword id="KW-1132">Decay of host mRNAs by virus</keyword>
<keyword id="KW-1262">Eukaryotic host gene expression shutoff by virus</keyword>
<keyword id="KW-1035">Host cytoplasm</keyword>
<keyword id="KW-1190">Host gene expression shutoff by virus</keyword>
<keyword id="KW-1192">Host mRNA suppression by virus</keyword>
<keyword id="KW-1048">Host nucleus</keyword>
<keyword id="KW-0945">Host-virus interaction</keyword>
<keyword id="KW-0688">Ribosomal frameshifting</keyword>
<feature type="chain" id="PRO_0000419354" description="Protein PA-X">
    <location>
        <begin position="1"/>
        <end position="252"/>
    </location>
</feature>
<feature type="active site" evidence="2">
    <location>
        <position position="80"/>
    </location>
</feature>
<feature type="active site" evidence="2">
    <location>
        <position position="108"/>
    </location>
</feature>
<feature type="site" description="Important for efficient shutoff activity and nuclear localization" evidence="4">
    <location>
        <position position="195"/>
    </location>
</feature>
<feature type="site" description="Important for efficient shutoff activity and nuclear localization" evidence="4">
    <location>
        <position position="198"/>
    </location>
</feature>
<feature type="site" description="Important for efficient shutoff activity and nuclear localization" evidence="4">
    <location>
        <position position="199"/>
    </location>
</feature>
<feature type="site" description="Important for efficient shutoff activity" evidence="3">
    <location>
        <position position="202"/>
    </location>
</feature>
<feature type="site" description="Important for efficient shutoff activity" evidence="3">
    <location>
        <position position="203"/>
    </location>
</feature>
<feature type="site" description="Important for efficient shutoff activity" evidence="3">
    <location>
        <position position="206"/>
    </location>
</feature>
<protein>
    <recommendedName>
        <fullName>Protein PA-X</fullName>
    </recommendedName>
</protein>